<name>CALX_HELTU</name>
<reference key="1">
    <citation type="submission" date="1994-07" db="EMBL/GenBank/DDBJ databases">
        <title>Cloning and characterization of a cDNA encoding an analog of the calnexin chaperone from Jerusalem artichoke.</title>
        <authorList>
            <person name="Hasenfratz M."/>
            <person name="Jeltsch J."/>
            <person name="Lesot A."/>
            <person name="Michalak M."/>
            <person name="Durst F."/>
        </authorList>
    </citation>
    <scope>NUCLEOTIDE SEQUENCE [MRNA]</scope>
    <source>
        <strain>cv. Blanc commun</strain>
        <tissue>Tuber</tissue>
    </source>
</reference>
<sequence>MELSRRKMCCYIQFCCFVLIGCFISQICASSDAIFYESFDESFEGSWIVSEKEDYPGEWKHSKSEGHDDYGLLVSDKARKYAIVKELEKPVELKDGTIVLQYEVRLQNGLECGGAYLKYLRPQDAGWTAKGFDNESPYSIMFGPDKCGATNKVHFILKHKNPKSGDYVEHHLKFPPSVPSDKLTHVYTAVIKPDNELVILIDGEEKKKANFLSSEDFEPALIPTKTIPDPDDKKPEDWDERAKIPDPEATKPDDWDEDAPMEILDEEAEKPEGWLDDEPEEIDDPEAVKPEDWDDEEDGEWEAPQIENPKCESAPGCGEWRRPLKRNPAYKGKWHAPLIDNPAYKGIWKPREIPNPDYFELEKPNFEPIAAIGIEDLDQQDGILFDNILIASDEKTAAKSGILLGSRSLRWKKRNRRLKKNQPLLDGLKGIQKAVFDVLYKIADLPFLGDHKVKVLELIEKAETQPNITIGVIVSIIVVIFSILLKLLFGGKKAAPKVNVVPKKKEEPEASNTAEVREGEEEKTEGEVAAAPRRRPRRDT</sequence>
<evidence type="ECO:0000250" key="1"/>
<evidence type="ECO:0000250" key="2">
    <source>
        <dbReference type="UniProtKB" id="P14211"/>
    </source>
</evidence>
<evidence type="ECO:0000255" key="3"/>
<evidence type="ECO:0000256" key="4">
    <source>
        <dbReference type="SAM" id="MobiDB-lite"/>
    </source>
</evidence>
<evidence type="ECO:0000305" key="5"/>
<dbReference type="EMBL" id="Z35108">
    <property type="protein sequence ID" value="CAA84491.1"/>
    <property type="molecule type" value="mRNA"/>
</dbReference>
<dbReference type="PIR" id="T10892">
    <property type="entry name" value="T10892"/>
</dbReference>
<dbReference type="SMR" id="Q39994"/>
<dbReference type="GO" id="GO:0005789">
    <property type="term" value="C:endoplasmic reticulum membrane"/>
    <property type="evidence" value="ECO:0007669"/>
    <property type="project" value="UniProtKB-SubCell"/>
</dbReference>
<dbReference type="GO" id="GO:0005509">
    <property type="term" value="F:calcium ion binding"/>
    <property type="evidence" value="ECO:0007669"/>
    <property type="project" value="InterPro"/>
</dbReference>
<dbReference type="GO" id="GO:0030246">
    <property type="term" value="F:carbohydrate binding"/>
    <property type="evidence" value="ECO:0007669"/>
    <property type="project" value="UniProtKB-KW"/>
</dbReference>
<dbReference type="GO" id="GO:0051082">
    <property type="term" value="F:unfolded protein binding"/>
    <property type="evidence" value="ECO:0007669"/>
    <property type="project" value="InterPro"/>
</dbReference>
<dbReference type="GO" id="GO:0036503">
    <property type="term" value="P:ERAD pathway"/>
    <property type="evidence" value="ECO:0007669"/>
    <property type="project" value="TreeGrafter"/>
</dbReference>
<dbReference type="GO" id="GO:0006457">
    <property type="term" value="P:protein folding"/>
    <property type="evidence" value="ECO:0007669"/>
    <property type="project" value="InterPro"/>
</dbReference>
<dbReference type="FunFam" id="2.10.250.10:FF:000001">
    <property type="entry name" value="Calnexin homolog"/>
    <property type="match status" value="1"/>
</dbReference>
<dbReference type="FunFam" id="2.60.120.200:FF:000048">
    <property type="entry name" value="Calnexin homolog"/>
    <property type="match status" value="1"/>
</dbReference>
<dbReference type="Gene3D" id="2.60.120.200">
    <property type="match status" value="1"/>
</dbReference>
<dbReference type="Gene3D" id="2.10.250.10">
    <property type="entry name" value="Calreticulin/calnexin, P domain"/>
    <property type="match status" value="1"/>
</dbReference>
<dbReference type="InterPro" id="IPR001580">
    <property type="entry name" value="Calret/calnex"/>
</dbReference>
<dbReference type="InterPro" id="IPR018124">
    <property type="entry name" value="Calret/calnex_CS"/>
</dbReference>
<dbReference type="InterPro" id="IPR009033">
    <property type="entry name" value="Calreticulin/calnexin_P_dom_sf"/>
</dbReference>
<dbReference type="InterPro" id="IPR013320">
    <property type="entry name" value="ConA-like_dom_sf"/>
</dbReference>
<dbReference type="PANTHER" id="PTHR11073:SF1">
    <property type="entry name" value="CALNEXIN 14D-RELATED"/>
    <property type="match status" value="1"/>
</dbReference>
<dbReference type="PANTHER" id="PTHR11073">
    <property type="entry name" value="CALRETICULIN AND CALNEXIN"/>
    <property type="match status" value="1"/>
</dbReference>
<dbReference type="Pfam" id="PF00262">
    <property type="entry name" value="Calreticulin"/>
    <property type="match status" value="1"/>
</dbReference>
<dbReference type="PRINTS" id="PR00626">
    <property type="entry name" value="CALRETICULIN"/>
</dbReference>
<dbReference type="SUPFAM" id="SSF49899">
    <property type="entry name" value="Concanavalin A-like lectins/glucanases"/>
    <property type="match status" value="1"/>
</dbReference>
<dbReference type="SUPFAM" id="SSF63887">
    <property type="entry name" value="P-domain of calnexin/calreticulin"/>
    <property type="match status" value="1"/>
</dbReference>
<dbReference type="PROSITE" id="PS00803">
    <property type="entry name" value="CALRETICULIN_1"/>
    <property type="match status" value="1"/>
</dbReference>
<dbReference type="PROSITE" id="PS00804">
    <property type="entry name" value="CALRETICULIN_2"/>
    <property type="match status" value="1"/>
</dbReference>
<dbReference type="PROSITE" id="PS00805">
    <property type="entry name" value="CALRETICULIN_REPEAT"/>
    <property type="match status" value="3"/>
</dbReference>
<comment type="function">
    <text evidence="1">Calcium-binding protein that interacts with newly synthesized monoglucosylated glycoproteins in the endoplasmic reticulum. It may act in assisting protein assembly and/or in the retention within the ER of unassembled protein subunits. It seems to play a major role in the quality control apparatus of the ER by the retention of incorrectly folded proteins (By similarity).</text>
</comment>
<comment type="subcellular location">
    <subcellularLocation>
        <location evidence="1">Endoplasmic reticulum membrane</location>
        <topology evidence="1">Single-pass type I membrane protein</topology>
    </subcellularLocation>
</comment>
<comment type="similarity">
    <text evidence="5">Belongs to the calreticulin family.</text>
</comment>
<feature type="signal peptide" evidence="3">
    <location>
        <begin position="1"/>
        <end position="29"/>
    </location>
</feature>
<feature type="chain" id="PRO_0000004204" description="Calnexin homolog">
    <location>
        <begin position="30"/>
        <end position="540"/>
    </location>
</feature>
<feature type="topological domain" description="Lumenal" evidence="3">
    <location>
        <begin position="30"/>
        <end position="469"/>
    </location>
</feature>
<feature type="transmembrane region" description="Helical" evidence="3">
    <location>
        <begin position="470"/>
        <end position="490"/>
    </location>
</feature>
<feature type="topological domain" description="Cytoplasmic" evidence="3">
    <location>
        <begin position="491"/>
        <end position="540"/>
    </location>
</feature>
<feature type="repeat" description="1-1">
    <location>
        <begin position="229"/>
        <end position="240"/>
    </location>
</feature>
<feature type="repeat" description="1-2">
    <location>
        <begin position="246"/>
        <end position="257"/>
    </location>
</feature>
<feature type="repeat" description="1-3">
    <location>
        <begin position="265"/>
        <end position="276"/>
    </location>
</feature>
<feature type="repeat" description="1-4">
    <location>
        <begin position="284"/>
        <end position="295"/>
    </location>
</feature>
<feature type="repeat" description="2-1">
    <location>
        <begin position="299"/>
        <end position="309"/>
    </location>
</feature>
<feature type="repeat" description="2-2">
    <location>
        <begin position="318"/>
        <end position="328"/>
    </location>
</feature>
<feature type="repeat" description="2-3">
    <location>
        <begin position="332"/>
        <end position="342"/>
    </location>
</feature>
<feature type="repeat" description="2-4">
    <location>
        <begin position="346"/>
        <end position="356"/>
    </location>
</feature>
<feature type="region of interest" description="Disordered" evidence="4">
    <location>
        <begin position="221"/>
        <end position="301"/>
    </location>
</feature>
<feature type="region of interest" description="P domain (Extended arm)" evidence="1">
    <location>
        <begin position="227"/>
        <end position="360"/>
    </location>
</feature>
<feature type="region of interest" description="4 X approximate repeats">
    <location>
        <begin position="229"/>
        <end position="295"/>
    </location>
</feature>
<feature type="region of interest" description="4 X approximate repeats">
    <location>
        <begin position="299"/>
        <end position="356"/>
    </location>
</feature>
<feature type="region of interest" description="Disordered" evidence="4">
    <location>
        <begin position="499"/>
        <end position="540"/>
    </location>
</feature>
<feature type="compositionally biased region" description="Basic and acidic residues" evidence="4">
    <location>
        <begin position="228"/>
        <end position="253"/>
    </location>
</feature>
<feature type="compositionally biased region" description="Acidic residues" evidence="4">
    <location>
        <begin position="254"/>
        <end position="285"/>
    </location>
</feature>
<feature type="compositionally biased region" description="Acidic residues" evidence="4">
    <location>
        <begin position="292"/>
        <end position="301"/>
    </location>
</feature>
<feature type="binding site" evidence="1">
    <location>
        <position position="38"/>
    </location>
    <ligand>
        <name>Ca(2+)</name>
        <dbReference type="ChEBI" id="CHEBI:29108"/>
    </ligand>
</feature>
<feature type="binding site" evidence="1">
    <location>
        <position position="69"/>
    </location>
    <ligand>
        <name>Ca(2+)</name>
        <dbReference type="ChEBI" id="CHEBI:29108"/>
    </ligand>
</feature>
<feature type="binding site" evidence="2">
    <location>
        <position position="116"/>
    </location>
    <ligand>
        <name>an alpha-D-glucoside</name>
        <dbReference type="ChEBI" id="CHEBI:22390"/>
    </ligand>
</feature>
<feature type="binding site" evidence="2">
    <location>
        <position position="118"/>
    </location>
    <ligand>
        <name>an alpha-D-glucoside</name>
        <dbReference type="ChEBI" id="CHEBI:22390"/>
    </ligand>
</feature>
<feature type="binding site" evidence="2">
    <location>
        <position position="138"/>
    </location>
    <ligand>
        <name>an alpha-D-glucoside</name>
        <dbReference type="ChEBI" id="CHEBI:22390"/>
    </ligand>
</feature>
<feature type="binding site" evidence="2">
    <location>
        <position position="145"/>
    </location>
    <ligand>
        <name>an alpha-D-glucoside</name>
        <dbReference type="ChEBI" id="CHEBI:22390"/>
    </ligand>
</feature>
<feature type="binding site" evidence="2">
    <location>
        <position position="375"/>
    </location>
    <ligand>
        <name>an alpha-D-glucoside</name>
        <dbReference type="ChEBI" id="CHEBI:22390"/>
    </ligand>
</feature>
<feature type="binding site" evidence="1">
    <location>
        <position position="386"/>
    </location>
    <ligand>
        <name>Ca(2+)</name>
        <dbReference type="ChEBI" id="CHEBI:29108"/>
    </ligand>
</feature>
<feature type="glycosylation site" description="N-linked (GlcNAc...) asparagine" evidence="3">
    <location>
        <position position="467"/>
    </location>
</feature>
<feature type="disulfide bond" evidence="1">
    <location>
        <begin position="112"/>
        <end position="147"/>
    </location>
</feature>
<feature type="disulfide bond" evidence="1">
    <location>
        <begin position="311"/>
        <end position="317"/>
    </location>
</feature>
<proteinExistence type="evidence at transcript level"/>
<organism>
    <name type="scientific">Helianthus tuberosus</name>
    <name type="common">Jerusalem artichoke</name>
    <name type="synonym">Helianthus tomentosus</name>
    <dbReference type="NCBI Taxonomy" id="4233"/>
    <lineage>
        <taxon>Eukaryota</taxon>
        <taxon>Viridiplantae</taxon>
        <taxon>Streptophyta</taxon>
        <taxon>Embryophyta</taxon>
        <taxon>Tracheophyta</taxon>
        <taxon>Spermatophyta</taxon>
        <taxon>Magnoliopsida</taxon>
        <taxon>eudicotyledons</taxon>
        <taxon>Gunneridae</taxon>
        <taxon>Pentapetalae</taxon>
        <taxon>asterids</taxon>
        <taxon>campanulids</taxon>
        <taxon>Asterales</taxon>
        <taxon>Asteraceae</taxon>
        <taxon>Asteroideae</taxon>
        <taxon>Heliantheae alliance</taxon>
        <taxon>Heliantheae</taxon>
        <taxon>Helianthus</taxon>
    </lineage>
</organism>
<protein>
    <recommendedName>
        <fullName>Calnexin homolog</fullName>
    </recommendedName>
</protein>
<keyword id="KW-0106">Calcium</keyword>
<keyword id="KW-0143">Chaperone</keyword>
<keyword id="KW-1015">Disulfide bond</keyword>
<keyword id="KW-0256">Endoplasmic reticulum</keyword>
<keyword id="KW-0325">Glycoprotein</keyword>
<keyword id="KW-0430">Lectin</keyword>
<keyword id="KW-0472">Membrane</keyword>
<keyword id="KW-0479">Metal-binding</keyword>
<keyword id="KW-0677">Repeat</keyword>
<keyword id="KW-0732">Signal</keyword>
<keyword id="KW-0812">Transmembrane</keyword>
<keyword id="KW-1133">Transmembrane helix</keyword>
<accession>Q39994</accession>